<proteinExistence type="inferred from homology"/>
<feature type="chain" id="PRO_1000200567" description="UvrABC system protein C">
    <location>
        <begin position="1"/>
        <end position="594"/>
    </location>
</feature>
<feature type="domain" description="GIY-YIG" evidence="1">
    <location>
        <begin position="14"/>
        <end position="91"/>
    </location>
</feature>
<feature type="domain" description="UVR" evidence="1">
    <location>
        <begin position="196"/>
        <end position="231"/>
    </location>
</feature>
<accession>C1ETV9</accession>
<gene>
    <name evidence="1" type="primary">uvrC</name>
    <name type="ordered locus">BCA_4626</name>
</gene>
<reference key="1">
    <citation type="submission" date="2009-02" db="EMBL/GenBank/DDBJ databases">
        <title>Genome sequence of Bacillus cereus 03BB102.</title>
        <authorList>
            <person name="Dodson R.J."/>
            <person name="Jackson P."/>
            <person name="Munk A.C."/>
            <person name="Brettin T."/>
            <person name="Bruce D."/>
            <person name="Detter C."/>
            <person name="Tapia R."/>
            <person name="Han C."/>
            <person name="Sutton G."/>
            <person name="Sims D."/>
        </authorList>
    </citation>
    <scope>NUCLEOTIDE SEQUENCE [LARGE SCALE GENOMIC DNA]</scope>
    <source>
        <strain>03BB102</strain>
    </source>
</reference>
<dbReference type="EMBL" id="CP001407">
    <property type="protein sequence ID" value="ACO26781.1"/>
    <property type="molecule type" value="Genomic_DNA"/>
</dbReference>
<dbReference type="RefSeq" id="WP_000544275.1">
    <property type="nucleotide sequence ID" value="NZ_CP009318.1"/>
</dbReference>
<dbReference type="SMR" id="C1ETV9"/>
<dbReference type="KEGG" id="bcx:BCA_4626"/>
<dbReference type="PATRIC" id="fig|572264.18.peg.4573"/>
<dbReference type="Proteomes" id="UP000002210">
    <property type="component" value="Chromosome"/>
</dbReference>
<dbReference type="GO" id="GO:0005737">
    <property type="term" value="C:cytoplasm"/>
    <property type="evidence" value="ECO:0007669"/>
    <property type="project" value="UniProtKB-SubCell"/>
</dbReference>
<dbReference type="GO" id="GO:0009380">
    <property type="term" value="C:excinuclease repair complex"/>
    <property type="evidence" value="ECO:0007669"/>
    <property type="project" value="InterPro"/>
</dbReference>
<dbReference type="GO" id="GO:0003677">
    <property type="term" value="F:DNA binding"/>
    <property type="evidence" value="ECO:0007669"/>
    <property type="project" value="UniProtKB-UniRule"/>
</dbReference>
<dbReference type="GO" id="GO:0009381">
    <property type="term" value="F:excinuclease ABC activity"/>
    <property type="evidence" value="ECO:0007669"/>
    <property type="project" value="UniProtKB-UniRule"/>
</dbReference>
<dbReference type="GO" id="GO:0006289">
    <property type="term" value="P:nucleotide-excision repair"/>
    <property type="evidence" value="ECO:0007669"/>
    <property type="project" value="UniProtKB-UniRule"/>
</dbReference>
<dbReference type="GO" id="GO:0009432">
    <property type="term" value="P:SOS response"/>
    <property type="evidence" value="ECO:0007669"/>
    <property type="project" value="UniProtKB-UniRule"/>
</dbReference>
<dbReference type="CDD" id="cd10434">
    <property type="entry name" value="GIY-YIG_UvrC_Cho"/>
    <property type="match status" value="1"/>
</dbReference>
<dbReference type="FunFam" id="1.10.150.20:FF:000005">
    <property type="entry name" value="UvrABC system protein C"/>
    <property type="match status" value="1"/>
</dbReference>
<dbReference type="FunFam" id="3.30.420.340:FF:000002">
    <property type="entry name" value="UvrABC system protein C"/>
    <property type="match status" value="1"/>
</dbReference>
<dbReference type="FunFam" id="3.40.1440.10:FF:000001">
    <property type="entry name" value="UvrABC system protein C"/>
    <property type="match status" value="1"/>
</dbReference>
<dbReference type="FunFam" id="4.10.860.10:FF:000002">
    <property type="entry name" value="UvrABC system protein C"/>
    <property type="match status" value="1"/>
</dbReference>
<dbReference type="Gene3D" id="1.10.150.20">
    <property type="entry name" value="5' to 3' exonuclease, C-terminal subdomain"/>
    <property type="match status" value="1"/>
</dbReference>
<dbReference type="Gene3D" id="3.40.1440.10">
    <property type="entry name" value="GIY-YIG endonuclease"/>
    <property type="match status" value="1"/>
</dbReference>
<dbReference type="Gene3D" id="4.10.860.10">
    <property type="entry name" value="UVR domain"/>
    <property type="match status" value="1"/>
</dbReference>
<dbReference type="Gene3D" id="3.30.420.340">
    <property type="entry name" value="UvrC, RNAse H endonuclease domain"/>
    <property type="match status" value="1"/>
</dbReference>
<dbReference type="HAMAP" id="MF_00203">
    <property type="entry name" value="UvrC"/>
    <property type="match status" value="1"/>
</dbReference>
<dbReference type="InterPro" id="IPR000305">
    <property type="entry name" value="GIY-YIG_endonuc"/>
</dbReference>
<dbReference type="InterPro" id="IPR035901">
    <property type="entry name" value="GIY-YIG_endonuc_sf"/>
</dbReference>
<dbReference type="InterPro" id="IPR047296">
    <property type="entry name" value="GIY-YIG_UvrC_Cho"/>
</dbReference>
<dbReference type="InterPro" id="IPR010994">
    <property type="entry name" value="RuvA_2-like"/>
</dbReference>
<dbReference type="InterPro" id="IPR001943">
    <property type="entry name" value="UVR_dom"/>
</dbReference>
<dbReference type="InterPro" id="IPR036876">
    <property type="entry name" value="UVR_dom_sf"/>
</dbReference>
<dbReference type="InterPro" id="IPR050066">
    <property type="entry name" value="UvrABC_protein_C"/>
</dbReference>
<dbReference type="InterPro" id="IPR004791">
    <property type="entry name" value="UvrC"/>
</dbReference>
<dbReference type="InterPro" id="IPR001162">
    <property type="entry name" value="UvrC_RNase_H_dom"/>
</dbReference>
<dbReference type="InterPro" id="IPR038476">
    <property type="entry name" value="UvrC_RNase_H_dom_sf"/>
</dbReference>
<dbReference type="NCBIfam" id="NF001824">
    <property type="entry name" value="PRK00558.1-5"/>
    <property type="match status" value="1"/>
</dbReference>
<dbReference type="NCBIfam" id="TIGR00194">
    <property type="entry name" value="uvrC"/>
    <property type="match status" value="1"/>
</dbReference>
<dbReference type="PANTHER" id="PTHR30562:SF1">
    <property type="entry name" value="UVRABC SYSTEM PROTEIN C"/>
    <property type="match status" value="1"/>
</dbReference>
<dbReference type="PANTHER" id="PTHR30562">
    <property type="entry name" value="UVRC/OXIDOREDUCTASE"/>
    <property type="match status" value="1"/>
</dbReference>
<dbReference type="Pfam" id="PF01541">
    <property type="entry name" value="GIY-YIG"/>
    <property type="match status" value="1"/>
</dbReference>
<dbReference type="Pfam" id="PF02151">
    <property type="entry name" value="UVR"/>
    <property type="match status" value="1"/>
</dbReference>
<dbReference type="Pfam" id="PF22920">
    <property type="entry name" value="UvrC_RNaseH"/>
    <property type="match status" value="1"/>
</dbReference>
<dbReference type="Pfam" id="PF08459">
    <property type="entry name" value="UvrC_RNaseH_dom"/>
    <property type="match status" value="1"/>
</dbReference>
<dbReference type="SMART" id="SM00465">
    <property type="entry name" value="GIYc"/>
    <property type="match status" value="1"/>
</dbReference>
<dbReference type="SUPFAM" id="SSF46600">
    <property type="entry name" value="C-terminal UvrC-binding domain of UvrB"/>
    <property type="match status" value="1"/>
</dbReference>
<dbReference type="SUPFAM" id="SSF82771">
    <property type="entry name" value="GIY-YIG endonuclease"/>
    <property type="match status" value="1"/>
</dbReference>
<dbReference type="SUPFAM" id="SSF47781">
    <property type="entry name" value="RuvA domain 2-like"/>
    <property type="match status" value="1"/>
</dbReference>
<dbReference type="PROSITE" id="PS50164">
    <property type="entry name" value="GIY_YIG"/>
    <property type="match status" value="1"/>
</dbReference>
<dbReference type="PROSITE" id="PS50151">
    <property type="entry name" value="UVR"/>
    <property type="match status" value="1"/>
</dbReference>
<dbReference type="PROSITE" id="PS50165">
    <property type="entry name" value="UVRC"/>
    <property type="match status" value="1"/>
</dbReference>
<sequence>MHEHLKEKLAILPDQPGCYLMKDKQGTVIYVGKAKVLKNRVRSYFTGSHDGKTLRLVGEIVDFEYIVTSSNLEALILELNLIKKHDPKYNIQLKDDKTYPFIKITAEKQPRLLITRNVKKDKGKYFGPYPNAQSAHETKKLLDRMYPLRKCSNMPDKVCLYYHMGQCLAPCVKEVTEEQNKEIVDEIIKFLNGGHKEVRSELETKMYEASEKLEFERAKELRDQIAHIDAIMEKQKMIMSDLVDRDVFGYAVDKGWMCVQVFFVRKGKLIERDVSMFPIYDEPEEGFLTFIGQFYENSSHFKPKEIVVPGSIDSELVERFLEVEATQPKRGKKKDLVELANKNAKIALEEKFYLIERDEERTIKAVENLGKQLGIETPYRIEAFDNSNIQGTNPVSAMIAFIDGKPAKKEYRKYKIKTVQGPDDYESMREVVRRRYTRALKEGLPLPDLIIIDGGKGHLAAASDVLENELGLYIPMAGLVKDDKHKTSHLIIGDPPEPVMLERNSQEFYLLQRVQDEVHRFAITFHRQLHGKSVIQSALDDIPGIGDKRKKVLLKHFGSLKKMKEASIEEFVEAGMPKNVAETIYTYLTDKKTL</sequence>
<keyword id="KW-0963">Cytoplasm</keyword>
<keyword id="KW-0227">DNA damage</keyword>
<keyword id="KW-0228">DNA excision</keyword>
<keyword id="KW-0234">DNA repair</keyword>
<keyword id="KW-0267">Excision nuclease</keyword>
<keyword id="KW-0742">SOS response</keyword>
<protein>
    <recommendedName>
        <fullName evidence="1">UvrABC system protein C</fullName>
        <shortName evidence="1">Protein UvrC</shortName>
    </recommendedName>
    <alternativeName>
        <fullName evidence="1">Excinuclease ABC subunit C</fullName>
    </alternativeName>
</protein>
<comment type="function">
    <text evidence="1">The UvrABC repair system catalyzes the recognition and processing of DNA lesions. UvrC both incises the 5' and 3' sides of the lesion. The N-terminal half is responsible for the 3' incision and the C-terminal half is responsible for the 5' incision.</text>
</comment>
<comment type="subunit">
    <text evidence="1">Interacts with UvrB in an incision complex.</text>
</comment>
<comment type="subcellular location">
    <subcellularLocation>
        <location evidence="1">Cytoplasm</location>
    </subcellularLocation>
</comment>
<comment type="similarity">
    <text evidence="1">Belongs to the UvrC family.</text>
</comment>
<name>UVRC_BACC3</name>
<organism>
    <name type="scientific">Bacillus cereus (strain 03BB102)</name>
    <dbReference type="NCBI Taxonomy" id="572264"/>
    <lineage>
        <taxon>Bacteria</taxon>
        <taxon>Bacillati</taxon>
        <taxon>Bacillota</taxon>
        <taxon>Bacilli</taxon>
        <taxon>Bacillales</taxon>
        <taxon>Bacillaceae</taxon>
        <taxon>Bacillus</taxon>
        <taxon>Bacillus cereus group</taxon>
    </lineage>
</organism>
<evidence type="ECO:0000255" key="1">
    <source>
        <dbReference type="HAMAP-Rule" id="MF_00203"/>
    </source>
</evidence>